<protein>
    <recommendedName>
        <fullName evidence="1">Dual-specificity RNA methyltransferase RlmN</fullName>
        <ecNumber evidence="1">2.1.1.192</ecNumber>
    </recommendedName>
    <alternativeName>
        <fullName evidence="1">23S rRNA (adenine(2503)-C(2))-methyltransferase</fullName>
    </alternativeName>
    <alternativeName>
        <fullName evidence="1">23S rRNA m2A2503 methyltransferase</fullName>
    </alternativeName>
    <alternativeName>
        <fullName evidence="1">Ribosomal RNA large subunit methyltransferase N</fullName>
    </alternativeName>
    <alternativeName>
        <fullName evidence="1">tRNA (adenine(37)-C(2))-methyltransferase</fullName>
    </alternativeName>
    <alternativeName>
        <fullName evidence="1">tRNA m2A37 methyltransferase</fullName>
    </alternativeName>
</protein>
<keyword id="KW-0004">4Fe-4S</keyword>
<keyword id="KW-0963">Cytoplasm</keyword>
<keyword id="KW-1015">Disulfide bond</keyword>
<keyword id="KW-0408">Iron</keyword>
<keyword id="KW-0411">Iron-sulfur</keyword>
<keyword id="KW-0479">Metal-binding</keyword>
<keyword id="KW-0489">Methyltransferase</keyword>
<keyword id="KW-1185">Reference proteome</keyword>
<keyword id="KW-0698">rRNA processing</keyword>
<keyword id="KW-0949">S-adenosyl-L-methionine</keyword>
<keyword id="KW-0808">Transferase</keyword>
<keyword id="KW-0819">tRNA processing</keyword>
<reference key="1">
    <citation type="submission" date="2007-07" db="EMBL/GenBank/DDBJ databases">
        <title>Genome sequence of Campylobacter curvus 525.92 isolated from human feces.</title>
        <authorList>
            <person name="Fouts D.E."/>
            <person name="Mongodin E.F."/>
            <person name="Puiu D."/>
            <person name="Sebastian Y."/>
            <person name="Miller W.G."/>
            <person name="Mandrell R.E."/>
            <person name="Lastovica A.J."/>
            <person name="Nelson K.E."/>
        </authorList>
    </citation>
    <scope>NUCLEOTIDE SEQUENCE [LARGE SCALE GENOMIC DNA]</scope>
    <source>
        <strain>525.92</strain>
    </source>
</reference>
<evidence type="ECO:0000255" key="1">
    <source>
        <dbReference type="HAMAP-Rule" id="MF_01849"/>
    </source>
</evidence>
<evidence type="ECO:0000255" key="2">
    <source>
        <dbReference type="PROSITE-ProRule" id="PRU01266"/>
    </source>
</evidence>
<evidence type="ECO:0000256" key="3">
    <source>
        <dbReference type="SAM" id="MobiDB-lite"/>
    </source>
</evidence>
<organism>
    <name type="scientific">Campylobacter curvus (strain 525.92)</name>
    <dbReference type="NCBI Taxonomy" id="360105"/>
    <lineage>
        <taxon>Bacteria</taxon>
        <taxon>Pseudomonadati</taxon>
        <taxon>Campylobacterota</taxon>
        <taxon>Epsilonproteobacteria</taxon>
        <taxon>Campylobacterales</taxon>
        <taxon>Campylobacteraceae</taxon>
        <taxon>Campylobacter</taxon>
    </lineage>
</organism>
<sequence>MKNLLDYTLSELEAILSPKFRAKQIYEWIYKKNAENFDEMLNLPKDMRTNLAQEFYFDPLYCVKFEESSDGSIKYLFALKDGNTIESVLLPMKEVEVDEGGNISRHARYTICVSSQVGCKMGCLFCLTAKGGLKRNLSPGEIVGQILWIKKTNHIPYERRVNVVYMGMGEPLDNLANVAKAIQILKEPDGLAISPRRQTVSTSGLGAQIKKLGEMDLGVLLAISLHAVTNELRSKLMPVNKAYNIEAVMDAVRGFPIDMRKRVMFEYLVIRGMNDSVKDAKTLVKLLHGIKAKVNLIYFNPHEGSEYGRPELADMLEFQEYLRAHGVTCTIRQSKGLDISAACGQLKQRSQNLSPSNNNTSKPSDIKKSES</sequence>
<proteinExistence type="inferred from homology"/>
<dbReference type="EC" id="2.1.1.192" evidence="1"/>
<dbReference type="EMBL" id="CP000767">
    <property type="protein sequence ID" value="EAT99795.1"/>
    <property type="molecule type" value="Genomic_DNA"/>
</dbReference>
<dbReference type="RefSeq" id="WP_009649765.1">
    <property type="nucleotide sequence ID" value="NC_009715.2"/>
</dbReference>
<dbReference type="SMR" id="A7GVW3"/>
<dbReference type="STRING" id="360105.CCV52592_1119"/>
<dbReference type="KEGG" id="ccv:CCV52592_1119"/>
<dbReference type="HOGENOM" id="CLU_029101_2_0_7"/>
<dbReference type="OrthoDB" id="9793973at2"/>
<dbReference type="Proteomes" id="UP000006380">
    <property type="component" value="Chromosome"/>
</dbReference>
<dbReference type="GO" id="GO:0005737">
    <property type="term" value="C:cytoplasm"/>
    <property type="evidence" value="ECO:0007669"/>
    <property type="project" value="UniProtKB-SubCell"/>
</dbReference>
<dbReference type="GO" id="GO:0051539">
    <property type="term" value="F:4 iron, 4 sulfur cluster binding"/>
    <property type="evidence" value="ECO:0007669"/>
    <property type="project" value="UniProtKB-UniRule"/>
</dbReference>
<dbReference type="GO" id="GO:0046872">
    <property type="term" value="F:metal ion binding"/>
    <property type="evidence" value="ECO:0007669"/>
    <property type="project" value="UniProtKB-KW"/>
</dbReference>
<dbReference type="GO" id="GO:0070040">
    <property type="term" value="F:rRNA (adenine(2503)-C2-)-methyltransferase activity"/>
    <property type="evidence" value="ECO:0007669"/>
    <property type="project" value="UniProtKB-UniRule"/>
</dbReference>
<dbReference type="GO" id="GO:0019843">
    <property type="term" value="F:rRNA binding"/>
    <property type="evidence" value="ECO:0007669"/>
    <property type="project" value="UniProtKB-UniRule"/>
</dbReference>
<dbReference type="GO" id="GO:0002935">
    <property type="term" value="F:tRNA (adenine(37)-C2)-methyltransferase activity"/>
    <property type="evidence" value="ECO:0007669"/>
    <property type="project" value="UniProtKB-UniRule"/>
</dbReference>
<dbReference type="GO" id="GO:0000049">
    <property type="term" value="F:tRNA binding"/>
    <property type="evidence" value="ECO:0007669"/>
    <property type="project" value="UniProtKB-UniRule"/>
</dbReference>
<dbReference type="GO" id="GO:0070475">
    <property type="term" value="P:rRNA base methylation"/>
    <property type="evidence" value="ECO:0007669"/>
    <property type="project" value="UniProtKB-UniRule"/>
</dbReference>
<dbReference type="GO" id="GO:0030488">
    <property type="term" value="P:tRNA methylation"/>
    <property type="evidence" value="ECO:0007669"/>
    <property type="project" value="UniProtKB-UniRule"/>
</dbReference>
<dbReference type="CDD" id="cd01335">
    <property type="entry name" value="Radical_SAM"/>
    <property type="match status" value="1"/>
</dbReference>
<dbReference type="FunFam" id="3.20.20.70:FF:000014">
    <property type="entry name" value="Probable dual-specificity RNA methyltransferase RlmN"/>
    <property type="match status" value="1"/>
</dbReference>
<dbReference type="Gene3D" id="1.10.150.530">
    <property type="match status" value="1"/>
</dbReference>
<dbReference type="Gene3D" id="3.20.20.70">
    <property type="entry name" value="Aldolase class I"/>
    <property type="match status" value="1"/>
</dbReference>
<dbReference type="HAMAP" id="MF_01849">
    <property type="entry name" value="RNA_methyltr_RlmN"/>
    <property type="match status" value="1"/>
</dbReference>
<dbReference type="InterPro" id="IPR013785">
    <property type="entry name" value="Aldolase_TIM"/>
</dbReference>
<dbReference type="InterPro" id="IPR040072">
    <property type="entry name" value="Methyltransferase_A"/>
</dbReference>
<dbReference type="InterPro" id="IPR048641">
    <property type="entry name" value="RlmN_N"/>
</dbReference>
<dbReference type="InterPro" id="IPR027492">
    <property type="entry name" value="RNA_MTrfase_RlmN"/>
</dbReference>
<dbReference type="InterPro" id="IPR004383">
    <property type="entry name" value="rRNA_lsu_MTrfase_RlmN/Cfr"/>
</dbReference>
<dbReference type="InterPro" id="IPR007197">
    <property type="entry name" value="rSAM"/>
</dbReference>
<dbReference type="NCBIfam" id="TIGR00048">
    <property type="entry name" value="rRNA_mod_RlmN"/>
    <property type="match status" value="1"/>
</dbReference>
<dbReference type="PANTHER" id="PTHR30544">
    <property type="entry name" value="23S RRNA METHYLTRANSFERASE"/>
    <property type="match status" value="1"/>
</dbReference>
<dbReference type="PANTHER" id="PTHR30544:SF5">
    <property type="entry name" value="RADICAL SAM CORE DOMAIN-CONTAINING PROTEIN"/>
    <property type="match status" value="1"/>
</dbReference>
<dbReference type="Pfam" id="PF04055">
    <property type="entry name" value="Radical_SAM"/>
    <property type="match status" value="1"/>
</dbReference>
<dbReference type="Pfam" id="PF21016">
    <property type="entry name" value="RlmN_N"/>
    <property type="match status" value="1"/>
</dbReference>
<dbReference type="PIRSF" id="PIRSF006004">
    <property type="entry name" value="CHP00048"/>
    <property type="match status" value="1"/>
</dbReference>
<dbReference type="SFLD" id="SFLDF00275">
    <property type="entry name" value="adenosine_C2_methyltransferase"/>
    <property type="match status" value="1"/>
</dbReference>
<dbReference type="SFLD" id="SFLDG01062">
    <property type="entry name" value="methyltransferase_(Class_A)"/>
    <property type="match status" value="1"/>
</dbReference>
<dbReference type="SUPFAM" id="SSF102114">
    <property type="entry name" value="Radical SAM enzymes"/>
    <property type="match status" value="1"/>
</dbReference>
<dbReference type="PROSITE" id="PS51918">
    <property type="entry name" value="RADICAL_SAM"/>
    <property type="match status" value="1"/>
</dbReference>
<accession>A7GVW3</accession>
<name>RLMN_CAMC5</name>
<gene>
    <name evidence="1" type="primary">rlmN</name>
    <name type="ordered locus">Ccur92_00510</name>
    <name type="ORF">CCV52592_1119</name>
</gene>
<comment type="function">
    <text evidence="1">Specifically methylates position 2 of adenine 2503 in 23S rRNA and position 2 of adenine 37 in tRNAs. m2A2503 modification seems to play a crucial role in the proofreading step occurring at the peptidyl transferase center and thus would serve to optimize ribosomal fidelity.</text>
</comment>
<comment type="catalytic activity">
    <reaction evidence="1">
        <text>adenosine(2503) in 23S rRNA + 2 reduced [2Fe-2S]-[ferredoxin] + 2 S-adenosyl-L-methionine = 2-methyladenosine(2503) in 23S rRNA + 5'-deoxyadenosine + L-methionine + 2 oxidized [2Fe-2S]-[ferredoxin] + S-adenosyl-L-homocysteine</text>
        <dbReference type="Rhea" id="RHEA:42916"/>
        <dbReference type="Rhea" id="RHEA-COMP:10000"/>
        <dbReference type="Rhea" id="RHEA-COMP:10001"/>
        <dbReference type="Rhea" id="RHEA-COMP:10152"/>
        <dbReference type="Rhea" id="RHEA-COMP:10282"/>
        <dbReference type="ChEBI" id="CHEBI:17319"/>
        <dbReference type="ChEBI" id="CHEBI:33737"/>
        <dbReference type="ChEBI" id="CHEBI:33738"/>
        <dbReference type="ChEBI" id="CHEBI:57844"/>
        <dbReference type="ChEBI" id="CHEBI:57856"/>
        <dbReference type="ChEBI" id="CHEBI:59789"/>
        <dbReference type="ChEBI" id="CHEBI:74411"/>
        <dbReference type="ChEBI" id="CHEBI:74497"/>
        <dbReference type="EC" id="2.1.1.192"/>
    </reaction>
</comment>
<comment type="catalytic activity">
    <reaction evidence="1">
        <text>adenosine(37) in tRNA + 2 reduced [2Fe-2S]-[ferredoxin] + 2 S-adenosyl-L-methionine = 2-methyladenosine(37) in tRNA + 5'-deoxyadenosine + L-methionine + 2 oxidized [2Fe-2S]-[ferredoxin] + S-adenosyl-L-homocysteine</text>
        <dbReference type="Rhea" id="RHEA:43332"/>
        <dbReference type="Rhea" id="RHEA-COMP:10000"/>
        <dbReference type="Rhea" id="RHEA-COMP:10001"/>
        <dbReference type="Rhea" id="RHEA-COMP:10162"/>
        <dbReference type="Rhea" id="RHEA-COMP:10485"/>
        <dbReference type="ChEBI" id="CHEBI:17319"/>
        <dbReference type="ChEBI" id="CHEBI:33737"/>
        <dbReference type="ChEBI" id="CHEBI:33738"/>
        <dbReference type="ChEBI" id="CHEBI:57844"/>
        <dbReference type="ChEBI" id="CHEBI:57856"/>
        <dbReference type="ChEBI" id="CHEBI:59789"/>
        <dbReference type="ChEBI" id="CHEBI:74411"/>
        <dbReference type="ChEBI" id="CHEBI:74497"/>
        <dbReference type="EC" id="2.1.1.192"/>
    </reaction>
</comment>
<comment type="cofactor">
    <cofactor evidence="1">
        <name>[4Fe-4S] cluster</name>
        <dbReference type="ChEBI" id="CHEBI:49883"/>
    </cofactor>
    <text evidence="1">Binds 1 [4Fe-4S] cluster. The cluster is coordinated with 3 cysteines and an exchangeable S-adenosyl-L-methionine.</text>
</comment>
<comment type="subcellular location">
    <subcellularLocation>
        <location evidence="1">Cytoplasm</location>
    </subcellularLocation>
</comment>
<comment type="miscellaneous">
    <text evidence="1">Reaction proceeds by a ping-pong mechanism involving intermediate methylation of a conserved cysteine residue.</text>
</comment>
<comment type="similarity">
    <text evidence="1">Belongs to the radical SAM superfamily. RlmN family.</text>
</comment>
<feature type="chain" id="PRO_0000350091" description="Dual-specificity RNA methyltransferase RlmN">
    <location>
        <begin position="1"/>
        <end position="371"/>
    </location>
</feature>
<feature type="domain" description="Radical SAM core" evidence="2">
    <location>
        <begin position="105"/>
        <end position="338"/>
    </location>
</feature>
<feature type="region of interest" description="Disordered" evidence="3">
    <location>
        <begin position="348"/>
        <end position="371"/>
    </location>
</feature>
<feature type="compositionally biased region" description="Polar residues" evidence="3">
    <location>
        <begin position="348"/>
        <end position="363"/>
    </location>
</feature>
<feature type="active site" description="Proton acceptor" evidence="1">
    <location>
        <position position="86"/>
    </location>
</feature>
<feature type="active site" description="S-methylcysteine intermediate" evidence="1">
    <location>
        <position position="343"/>
    </location>
</feature>
<feature type="binding site" evidence="1">
    <location>
        <position position="119"/>
    </location>
    <ligand>
        <name>[4Fe-4S] cluster</name>
        <dbReference type="ChEBI" id="CHEBI:49883"/>
        <note>4Fe-4S-S-AdoMet</note>
    </ligand>
</feature>
<feature type="binding site" evidence="1">
    <location>
        <position position="123"/>
    </location>
    <ligand>
        <name>[4Fe-4S] cluster</name>
        <dbReference type="ChEBI" id="CHEBI:49883"/>
        <note>4Fe-4S-S-AdoMet</note>
    </ligand>
</feature>
<feature type="binding site" evidence="1">
    <location>
        <position position="126"/>
    </location>
    <ligand>
        <name>[4Fe-4S] cluster</name>
        <dbReference type="ChEBI" id="CHEBI:49883"/>
        <note>4Fe-4S-S-AdoMet</note>
    </ligand>
</feature>
<feature type="binding site" evidence="1">
    <location>
        <begin position="169"/>
        <end position="170"/>
    </location>
    <ligand>
        <name>S-adenosyl-L-methionine</name>
        <dbReference type="ChEBI" id="CHEBI:59789"/>
    </ligand>
</feature>
<feature type="binding site" evidence="1">
    <location>
        <position position="201"/>
    </location>
    <ligand>
        <name>S-adenosyl-L-methionine</name>
        <dbReference type="ChEBI" id="CHEBI:59789"/>
    </ligand>
</feature>
<feature type="binding site" evidence="1">
    <location>
        <begin position="224"/>
        <end position="226"/>
    </location>
    <ligand>
        <name>S-adenosyl-L-methionine</name>
        <dbReference type="ChEBI" id="CHEBI:59789"/>
    </ligand>
</feature>
<feature type="binding site" evidence="1">
    <location>
        <position position="300"/>
    </location>
    <ligand>
        <name>S-adenosyl-L-methionine</name>
        <dbReference type="ChEBI" id="CHEBI:59789"/>
    </ligand>
</feature>
<feature type="disulfide bond" description="(transient)" evidence="1">
    <location>
        <begin position="112"/>
        <end position="343"/>
    </location>
</feature>